<feature type="chain" id="PRO_0000204380" description="5'-AMP-activated protein kinase subunit gamma-1">
    <location>
        <begin position="1"/>
        <end position="330"/>
    </location>
</feature>
<feature type="domain" description="CBS 1" evidence="3">
    <location>
        <begin position="42"/>
        <end position="102"/>
    </location>
</feature>
<feature type="domain" description="CBS 2" evidence="3">
    <location>
        <begin position="124"/>
        <end position="186"/>
    </location>
</feature>
<feature type="domain" description="CBS 3" evidence="3">
    <location>
        <begin position="197"/>
        <end position="259"/>
    </location>
</feature>
<feature type="domain" description="CBS 4" evidence="3">
    <location>
        <begin position="271"/>
        <end position="328"/>
    </location>
</feature>
<feature type="region of interest" description="Disordered" evidence="4">
    <location>
        <begin position="1"/>
        <end position="25"/>
    </location>
</feature>
<feature type="short sequence motif" description="AMPK pseudosubstrate">
    <location>
        <begin position="137"/>
        <end position="158"/>
    </location>
</feature>
<feature type="compositionally biased region" description="Low complexity" evidence="4">
    <location>
        <begin position="1"/>
        <end position="12"/>
    </location>
</feature>
<feature type="binding site" evidence="6 15">
    <location>
        <position position="69"/>
    </location>
    <ligand>
        <name>ADP</name>
        <dbReference type="ChEBI" id="CHEBI:456216"/>
        <label>2</label>
    </ligand>
</feature>
<feature type="binding site" evidence="5 12">
    <location>
        <position position="69"/>
    </location>
    <ligand>
        <name>AMP</name>
        <dbReference type="ChEBI" id="CHEBI:456215"/>
        <label>2</label>
    </ligand>
</feature>
<feature type="binding site" evidence="5 13">
    <location>
        <position position="69"/>
    </location>
    <ligand>
        <name>ATP</name>
        <dbReference type="ChEBI" id="CHEBI:30616"/>
        <label>1</label>
    </ligand>
</feature>
<feature type="binding site" evidence="5 13">
    <location>
        <position position="69"/>
    </location>
    <ligand>
        <name>ATP</name>
        <dbReference type="ChEBI" id="CHEBI:30616"/>
        <label>2</label>
    </ligand>
</feature>
<feature type="binding site" evidence="6 15">
    <location>
        <begin position="84"/>
        <end position="89"/>
    </location>
    <ligand>
        <name>ADP</name>
        <dbReference type="ChEBI" id="CHEBI:456216"/>
        <label>1</label>
    </ligand>
</feature>
<feature type="binding site" evidence="5 12">
    <location>
        <begin position="84"/>
        <end position="89"/>
    </location>
    <ligand>
        <name>AMP</name>
        <dbReference type="ChEBI" id="CHEBI:456215"/>
        <label>1</label>
    </ligand>
</feature>
<feature type="binding site" evidence="5 13">
    <location>
        <begin position="84"/>
        <end position="89"/>
    </location>
    <ligand>
        <name>ATP</name>
        <dbReference type="ChEBI" id="CHEBI:30616"/>
        <label>1</label>
    </ligand>
</feature>
<feature type="binding site" evidence="6 15">
    <location>
        <position position="129"/>
    </location>
    <ligand>
        <name>ADP</name>
        <dbReference type="ChEBI" id="CHEBI:456216"/>
        <label>1</label>
    </ligand>
</feature>
<feature type="binding site" evidence="5 12">
    <location>
        <position position="129"/>
    </location>
    <ligand>
        <name>AMP</name>
        <dbReference type="ChEBI" id="CHEBI:456215"/>
        <label>1</label>
    </ligand>
</feature>
<feature type="binding site" evidence="5 13">
    <location>
        <position position="129"/>
    </location>
    <ligand>
        <name>ATP</name>
        <dbReference type="ChEBI" id="CHEBI:30616"/>
        <label>1</label>
    </ligand>
</feature>
<feature type="binding site" evidence="6 15">
    <location>
        <begin position="150"/>
        <end position="151"/>
    </location>
    <ligand>
        <name>ADP</name>
        <dbReference type="ChEBI" id="CHEBI:456216"/>
        <label>1</label>
    </ligand>
</feature>
<feature type="binding site" evidence="5 12">
    <location>
        <begin position="150"/>
        <end position="151"/>
    </location>
    <ligand>
        <name>AMP</name>
        <dbReference type="ChEBI" id="CHEBI:456215"/>
        <label>1</label>
    </ligand>
</feature>
<feature type="binding site" evidence="5 13">
    <location>
        <begin position="150"/>
        <end position="151"/>
    </location>
    <ligand>
        <name>ATP</name>
        <dbReference type="ChEBI" id="CHEBI:30616"/>
        <label>1</label>
    </ligand>
</feature>
<feature type="binding site" evidence="5 6 12 15">
    <location>
        <position position="150"/>
    </location>
    <ligand>
        <name>AMP</name>
        <dbReference type="ChEBI" id="CHEBI:456215"/>
        <label>3</label>
    </ligand>
</feature>
<feature type="binding site" evidence="5 13">
    <location>
        <position position="151"/>
    </location>
    <ligand>
        <name>ATP</name>
        <dbReference type="ChEBI" id="CHEBI:30616"/>
        <label>2</label>
    </ligand>
</feature>
<feature type="binding site" evidence="6 15">
    <location>
        <position position="169"/>
    </location>
    <ligand>
        <name>ADP</name>
        <dbReference type="ChEBI" id="CHEBI:456216"/>
        <label>2</label>
    </ligand>
</feature>
<feature type="binding site" evidence="5 12">
    <location>
        <position position="169"/>
    </location>
    <ligand>
        <name>AMP</name>
        <dbReference type="ChEBI" id="CHEBI:456215"/>
        <label>2</label>
    </ligand>
</feature>
<feature type="binding site" evidence="5 13">
    <location>
        <position position="169"/>
    </location>
    <ligand>
        <name>ATP</name>
        <dbReference type="ChEBI" id="CHEBI:30616"/>
        <label>2</label>
    </ligand>
</feature>
<feature type="binding site" evidence="5 6 12 15">
    <location>
        <position position="199"/>
    </location>
    <ligand>
        <name>AMP</name>
        <dbReference type="ChEBI" id="CHEBI:456215"/>
        <label>3</label>
    </ligand>
</feature>
<feature type="binding site" evidence="5 6 12 15">
    <location>
        <position position="204"/>
    </location>
    <ligand>
        <name>AMP</name>
        <dbReference type="ChEBI" id="CHEBI:456215"/>
        <label>3</label>
    </ligand>
</feature>
<feature type="binding site" evidence="5 6 12 15">
    <location>
        <begin position="225"/>
        <end position="226"/>
    </location>
    <ligand>
        <name>AMP</name>
        <dbReference type="ChEBI" id="CHEBI:456215"/>
        <label>3</label>
    </ligand>
</feature>
<feature type="binding site" evidence="5 12">
    <location>
        <begin position="241"/>
        <end position="244"/>
    </location>
    <ligand>
        <name>ADP</name>
        <dbReference type="ChEBI" id="CHEBI:456216"/>
        <label>2</label>
    </ligand>
</feature>
<feature type="binding site" evidence="6 15">
    <location>
        <begin position="241"/>
        <end position="244"/>
    </location>
    <ligand>
        <name>AMP</name>
        <dbReference type="ChEBI" id="CHEBI:456215"/>
        <label>2</label>
    </ligand>
</feature>
<feature type="binding site" evidence="5 13">
    <location>
        <begin position="241"/>
        <end position="244"/>
    </location>
    <ligand>
        <name>ATP</name>
        <dbReference type="ChEBI" id="CHEBI:30616"/>
        <label>2</label>
    </ligand>
</feature>
<feature type="binding site" evidence="6 15">
    <location>
        <position position="268"/>
    </location>
    <ligand>
        <name>ADP</name>
        <dbReference type="ChEBI" id="CHEBI:456216"/>
        <label>2</label>
    </ligand>
</feature>
<feature type="binding site" evidence="5 12">
    <location>
        <position position="268"/>
    </location>
    <ligand>
        <name>AMP</name>
        <dbReference type="ChEBI" id="CHEBI:456215"/>
        <label>2</label>
    </ligand>
</feature>
<feature type="binding site" evidence="5 13">
    <location>
        <position position="268"/>
    </location>
    <ligand>
        <name>ATP</name>
        <dbReference type="ChEBI" id="CHEBI:30616"/>
        <label>2</label>
    </ligand>
</feature>
<feature type="binding site" evidence="6 15">
    <location>
        <position position="276"/>
    </location>
    <ligand>
        <name>ADP</name>
        <dbReference type="ChEBI" id="CHEBI:456216"/>
        <label>2</label>
    </ligand>
</feature>
<feature type="binding site" evidence="5 12">
    <location>
        <position position="276"/>
    </location>
    <ligand>
        <name>AMP</name>
        <dbReference type="ChEBI" id="CHEBI:456215"/>
        <label>2</label>
    </ligand>
</feature>
<feature type="binding site" evidence="5 13">
    <location>
        <position position="276"/>
    </location>
    <ligand>
        <name>ATP</name>
        <dbReference type="ChEBI" id="CHEBI:30616"/>
        <label>2</label>
    </ligand>
</feature>
<feature type="binding site" evidence="6 15">
    <location>
        <begin position="297"/>
        <end position="298"/>
    </location>
    <ligand>
        <name>ADP</name>
        <dbReference type="ChEBI" id="CHEBI:456216"/>
        <label>2</label>
    </ligand>
</feature>
<feature type="binding site" evidence="5 12">
    <location>
        <begin position="297"/>
        <end position="298"/>
    </location>
    <ligand>
        <name>AMP</name>
        <dbReference type="ChEBI" id="CHEBI:456215"/>
        <label>2</label>
    </ligand>
</feature>
<feature type="binding site" evidence="5 13">
    <location>
        <begin position="297"/>
        <end position="298"/>
    </location>
    <ligand>
        <name>ATP</name>
        <dbReference type="ChEBI" id="CHEBI:30616"/>
        <label>2</label>
    </ligand>
</feature>
<feature type="binding site" evidence="5 6 12 15">
    <location>
        <position position="297"/>
    </location>
    <ligand>
        <name>AMP</name>
        <dbReference type="ChEBI" id="CHEBI:456215"/>
        <label>3</label>
    </ligand>
</feature>
<feature type="binding site" evidence="5 6 12 15">
    <location>
        <begin position="313"/>
        <end position="316"/>
    </location>
    <ligand>
        <name>AMP</name>
        <dbReference type="ChEBI" id="CHEBI:456215"/>
        <label>3</label>
    </ligand>
</feature>
<feature type="modified residue" description="Phosphoserine; by ULK1" evidence="11">
    <location>
        <position position="260"/>
    </location>
</feature>
<feature type="modified residue" description="Phosphothreonine; by ULK1" evidence="11">
    <location>
        <position position="262"/>
    </location>
</feature>
<feature type="modified residue" description="Phosphoserine; by ULK1" evidence="7">
    <location>
        <position position="269"/>
    </location>
</feature>
<feature type="sequence conflict" description="In Ref. 4; AA sequence." evidence="10" ref="4">
    <original>E</original>
    <variation>Q</variation>
    <location>
        <position position="114"/>
    </location>
</feature>
<feature type="sequence conflict" description="In Ref. 4; AA sequence." evidence="10" ref="4">
    <original>A</original>
    <variation>P</variation>
    <location>
        <position position="201"/>
    </location>
</feature>
<feature type="helix" evidence="31">
    <location>
        <begin position="24"/>
        <end position="26"/>
    </location>
</feature>
<feature type="helix" evidence="27">
    <location>
        <begin position="27"/>
        <end position="34"/>
    </location>
</feature>
<feature type="helix" evidence="27">
    <location>
        <begin position="37"/>
        <end position="40"/>
    </location>
</feature>
<feature type="strand" evidence="27">
    <location>
        <begin position="43"/>
        <end position="51"/>
    </location>
</feature>
<feature type="helix" evidence="27">
    <location>
        <begin position="56"/>
        <end position="66"/>
    </location>
</feature>
<feature type="strand" evidence="27">
    <location>
        <begin position="69"/>
        <end position="75"/>
    </location>
</feature>
<feature type="turn" evidence="27">
    <location>
        <begin position="76"/>
        <end position="79"/>
    </location>
</feature>
<feature type="strand" evidence="27">
    <location>
        <begin position="80"/>
        <end position="86"/>
    </location>
</feature>
<feature type="helix" evidence="27">
    <location>
        <begin position="87"/>
        <end position="101"/>
    </location>
</feature>
<feature type="turn" evidence="27">
    <location>
        <begin position="102"/>
        <end position="104"/>
    </location>
</feature>
<feature type="helix" evidence="27">
    <location>
        <begin position="108"/>
        <end position="110"/>
    </location>
</feature>
<feature type="helix" evidence="27">
    <location>
        <begin position="113"/>
        <end position="120"/>
    </location>
</feature>
<feature type="strand" evidence="27">
    <location>
        <begin position="121"/>
        <end position="124"/>
    </location>
</feature>
<feature type="helix" evidence="27">
    <location>
        <begin position="137"/>
        <end position="147"/>
    </location>
</feature>
<feature type="strand" evidence="27">
    <location>
        <begin position="152"/>
        <end position="155"/>
    </location>
</feature>
<feature type="turn" evidence="27">
    <location>
        <begin position="157"/>
        <end position="159"/>
    </location>
</feature>
<feature type="strand" evidence="27">
    <location>
        <begin position="162"/>
        <end position="166"/>
    </location>
</feature>
<feature type="helix" evidence="27">
    <location>
        <begin position="168"/>
        <end position="178"/>
    </location>
</feature>
<feature type="strand" evidence="27">
    <location>
        <begin position="181"/>
        <end position="183"/>
    </location>
</feature>
<feature type="helix" evidence="27">
    <location>
        <begin position="186"/>
        <end position="189"/>
    </location>
</feature>
<feature type="helix" evidence="27">
    <location>
        <begin position="192"/>
        <end position="195"/>
    </location>
</feature>
<feature type="strand" evidence="32">
    <location>
        <begin position="206"/>
        <end position="209"/>
    </location>
</feature>
<feature type="helix" evidence="27">
    <location>
        <begin position="212"/>
        <end position="222"/>
    </location>
</feature>
<feature type="strand" evidence="27">
    <location>
        <begin position="225"/>
        <end position="230"/>
    </location>
</feature>
<feature type="strand" evidence="27">
    <location>
        <begin position="234"/>
        <end position="241"/>
    </location>
</feature>
<feature type="helix" evidence="27">
    <location>
        <begin position="242"/>
        <end position="244"/>
    </location>
</feature>
<feature type="helix" evidence="27">
    <location>
        <begin position="246"/>
        <end position="250"/>
    </location>
</feature>
<feature type="strand" evidence="27">
    <location>
        <begin position="258"/>
        <end position="260"/>
    </location>
</feature>
<feature type="helix" evidence="27">
    <location>
        <begin position="261"/>
        <end position="264"/>
    </location>
</feature>
<feature type="helix" evidence="27">
    <location>
        <begin position="265"/>
        <end position="267"/>
    </location>
</feature>
<feature type="strand" evidence="29">
    <location>
        <begin position="269"/>
        <end position="271"/>
    </location>
</feature>
<feature type="strand" evidence="28">
    <location>
        <begin position="277"/>
        <end position="279"/>
    </location>
</feature>
<feature type="strand" evidence="30">
    <location>
        <begin position="280"/>
        <end position="283"/>
    </location>
</feature>
<feature type="helix" evidence="27">
    <location>
        <begin position="284"/>
        <end position="294"/>
    </location>
</feature>
<feature type="strand" evidence="27">
    <location>
        <begin position="297"/>
        <end position="302"/>
    </location>
</feature>
<feature type="strand" evidence="27">
    <location>
        <begin position="306"/>
        <end position="313"/>
    </location>
</feature>
<feature type="helix" evidence="27">
    <location>
        <begin position="314"/>
        <end position="322"/>
    </location>
</feature>
<protein>
    <recommendedName>
        <fullName>5'-AMP-activated protein kinase subunit gamma-1</fullName>
        <shortName>AMPK gamma1</shortName>
        <shortName>AMPK subunit gamma-1</shortName>
        <shortName>AMPKg</shortName>
    </recommendedName>
</protein>
<gene>
    <name type="primary">Prkag1</name>
</gene>
<accession>P80385</accession>
<accession>Q4QQW6</accession>
<comment type="function">
    <text evidence="5 6">AMP/ATP-binding subunit of AMP-activated protein kinase (AMPK), an energy sensor protein kinase that plays a key role in regulating cellular energy metabolism. In response to reduction of intracellular ATP levels, AMPK activates energy-producing pathways and inhibits energy-consuming processes: inhibits protein, carbohydrate and lipid biosynthesis, as well as cell growth and proliferation. AMPK acts via direct phosphorylation of metabolic enzymes, and by longer-term effects via phosphorylation of transcription regulators. Also acts as a regulator of cellular polarity by remodeling the actin cytoskeleton; probably by indirectly activating myosin. Gamma non-catalytic subunit mediates binding to AMP, ADP and ATP, leading to activate or inhibit AMPK: AMP-binding results in allosteric activation of alpha catalytic subunit (PRKAA1 or PRKAA2) both by inducing phosphorylation and preventing dephosphorylation of catalytic subunits. ADP also stimulates phosphorylation, without stimulating already phosphorylated catalytic subunit. ATP promotes dephosphorylation of catalytic subunit, rendering the AMPK enzyme inactive.</text>
</comment>
<comment type="subunit">
    <text evidence="5 6">AMPK is a heterotrimer of an alpha catalytic subunit (PRKAA1 or PRKAA2), a beta (PRKAB1 or PRKAB2) and a gamma non-catalytic subunits (PRKAG1, PRKAG2 or PRKAG3). Interacts with FNIP1 and FNIP2.</text>
</comment>
<comment type="tissue specificity">
    <text>Highly expressed in heart and brain, also found in kidney, white adipose tissue, lung and spleen.</text>
</comment>
<comment type="domain">
    <text evidence="1">The AMPK pseudosubstrate motif resembles the sequence around sites phosphorylated on target proteins of AMPK, except the presence of a non-phosphorylatable residue in place of Ser. In the absence of AMP this pseudosubstrate sequence may bind to the active site groove on the alpha subunit (PRKAA1 or PRKAA2), preventing phosphorylation by the upstream activating kinase STK11/LKB1 (By similarity).</text>
</comment>
<comment type="domain">
    <text evidence="5 6 8 9">The 4 CBS domains mediate binding to nucleotides. Of the 4 potential nucleotide-binding sites, 3 are occupied, designated as sites 1, 3, and 4 based on the CBS modules that provide the acidic residue for coordination with the 2'- and 3'-hydroxyl groups of the ribose of AMP. Of these, site 4 appears to be a structural site that retains a tightly held AMP molecule (AMP 3). The 2 remaining sites, 1 and 3, can bind either AMP, ADP or ATP. Site 1 (AMP, ADP or ATP 1) is the high-affinity binding site and likely accommodates AMP or ADP. Site 3 (AMP, ADP or ATP 2) is the weakest nucleotide-binding site on the gamma subunit, yet it is exquisitely sensitive to changes in nucleotide levels and this allows AMPK to respond rapidly to changes in cellular energy status. Site 3 is likely to be responsible for protection of a conserved threonine in the activation loop of the alpha catalytic subunit through conformational changes induced by binding of AMP or ADP.</text>
</comment>
<comment type="PTM">
    <text evidence="7">Phosphorylated by ULK1 and ULK2; leading to negatively regulate AMPK activity and suggesting the existence of a regulatory feedback loop between ULK1, ULK2 and AMPK. There is some ambiguity for a phosphosite: Ser-260/Thr-262.</text>
</comment>
<comment type="PTM">
    <text evidence="2">Glycosylated; O-GlcNAcylated by OGT, promoting the AMP-activated protein kinase (AMPK) activity.</text>
</comment>
<comment type="similarity">
    <text evidence="10">Belongs to the 5'-AMP-activated protein kinase gamma subunit family.</text>
</comment>
<name>AAKG1_RAT</name>
<dbReference type="EMBL" id="X95578">
    <property type="protein sequence ID" value="CAA64831.1"/>
    <property type="molecule type" value="mRNA"/>
</dbReference>
<dbReference type="EMBL" id="BC097940">
    <property type="protein sequence ID" value="AAH97940.1"/>
    <property type="molecule type" value="mRNA"/>
</dbReference>
<dbReference type="EMBL" id="U42413">
    <property type="protein sequence ID" value="AAC52580.1"/>
    <property type="molecule type" value="mRNA"/>
</dbReference>
<dbReference type="PIR" id="T10759">
    <property type="entry name" value="T10759"/>
</dbReference>
<dbReference type="RefSeq" id="NP_037142.1">
    <property type="nucleotide sequence ID" value="NM_013010.2"/>
</dbReference>
<dbReference type="PDB" id="2V8Q">
    <property type="method" value="X-ray"/>
    <property type="resolution" value="2.10 A"/>
    <property type="chains" value="E=1-330"/>
</dbReference>
<dbReference type="PDB" id="2V92">
    <property type="method" value="X-ray"/>
    <property type="resolution" value="2.40 A"/>
    <property type="chains" value="E=1-330"/>
</dbReference>
<dbReference type="PDB" id="2V9J">
    <property type="method" value="X-ray"/>
    <property type="resolution" value="2.53 A"/>
    <property type="chains" value="E=1-330"/>
</dbReference>
<dbReference type="PDB" id="2Y8L">
    <property type="method" value="X-ray"/>
    <property type="resolution" value="2.50 A"/>
    <property type="chains" value="E=1-330"/>
</dbReference>
<dbReference type="PDB" id="2Y8Q">
    <property type="method" value="X-ray"/>
    <property type="resolution" value="2.80 A"/>
    <property type="chains" value="E=1-330"/>
</dbReference>
<dbReference type="PDB" id="2YA3">
    <property type="method" value="X-ray"/>
    <property type="resolution" value="2.51 A"/>
    <property type="chains" value="E=1-330"/>
</dbReference>
<dbReference type="PDB" id="4CFH">
    <property type="method" value="X-ray"/>
    <property type="resolution" value="3.24 A"/>
    <property type="chains" value="E=1-330"/>
</dbReference>
<dbReference type="PDB" id="4EAG">
    <property type="method" value="X-ray"/>
    <property type="resolution" value="2.70 A"/>
    <property type="chains" value="C=1-330"/>
</dbReference>
<dbReference type="PDB" id="4EAI">
    <property type="method" value="X-ray"/>
    <property type="resolution" value="2.28 A"/>
    <property type="chains" value="C=1-330"/>
</dbReference>
<dbReference type="PDB" id="4EAJ">
    <property type="method" value="X-ray"/>
    <property type="resolution" value="2.61 A"/>
    <property type="chains" value="C=1-330"/>
</dbReference>
<dbReference type="PDB" id="4EAK">
    <property type="method" value="X-ray"/>
    <property type="resolution" value="2.50 A"/>
    <property type="chains" value="C=1-330"/>
</dbReference>
<dbReference type="PDB" id="4EAL">
    <property type="method" value="X-ray"/>
    <property type="resolution" value="2.51 A"/>
    <property type="chains" value="C=1-330"/>
</dbReference>
<dbReference type="PDB" id="4QFG">
    <property type="method" value="X-ray"/>
    <property type="resolution" value="3.46 A"/>
    <property type="chains" value="C=1-330"/>
</dbReference>
<dbReference type="PDB" id="4QFR">
    <property type="method" value="X-ray"/>
    <property type="resolution" value="3.34 A"/>
    <property type="chains" value="C=1-330"/>
</dbReference>
<dbReference type="PDB" id="4QFS">
    <property type="method" value="X-ray"/>
    <property type="resolution" value="3.55 A"/>
    <property type="chains" value="C=1-330"/>
</dbReference>
<dbReference type="PDB" id="5KQ5">
    <property type="method" value="X-ray"/>
    <property type="resolution" value="3.41 A"/>
    <property type="chains" value="C=1-330"/>
</dbReference>
<dbReference type="PDB" id="5T5T">
    <property type="method" value="X-ray"/>
    <property type="resolution" value="3.46 A"/>
    <property type="chains" value="C=1-330"/>
</dbReference>
<dbReference type="PDB" id="5UFU">
    <property type="method" value="X-ray"/>
    <property type="resolution" value="3.45 A"/>
    <property type="chains" value="C=1-330"/>
</dbReference>
<dbReference type="PDB" id="6E4T">
    <property type="method" value="X-ray"/>
    <property type="resolution" value="3.40 A"/>
    <property type="chains" value="C=1-330"/>
</dbReference>
<dbReference type="PDB" id="6E4U">
    <property type="method" value="X-ray"/>
    <property type="resolution" value="3.27 A"/>
    <property type="chains" value="C=1-330"/>
</dbReference>
<dbReference type="PDB" id="6E4W">
    <property type="method" value="X-ray"/>
    <property type="resolution" value="3.35 A"/>
    <property type="chains" value="C=1-330"/>
</dbReference>
<dbReference type="PDBsum" id="2V8Q"/>
<dbReference type="PDBsum" id="2V92"/>
<dbReference type="PDBsum" id="2V9J"/>
<dbReference type="PDBsum" id="2Y8L"/>
<dbReference type="PDBsum" id="2Y8Q"/>
<dbReference type="PDBsum" id="2YA3"/>
<dbReference type="PDBsum" id="4CFH"/>
<dbReference type="PDBsum" id="4EAG"/>
<dbReference type="PDBsum" id="4EAI"/>
<dbReference type="PDBsum" id="4EAJ"/>
<dbReference type="PDBsum" id="4EAK"/>
<dbReference type="PDBsum" id="4EAL"/>
<dbReference type="PDBsum" id="4QFG"/>
<dbReference type="PDBsum" id="4QFR"/>
<dbReference type="PDBsum" id="4QFS"/>
<dbReference type="PDBsum" id="5KQ5"/>
<dbReference type="PDBsum" id="5T5T"/>
<dbReference type="PDBsum" id="5UFU"/>
<dbReference type="PDBsum" id="6E4T"/>
<dbReference type="PDBsum" id="6E4U"/>
<dbReference type="PDBsum" id="6E4W"/>
<dbReference type="SMR" id="P80385"/>
<dbReference type="BioGRID" id="247552">
    <property type="interactions" value="2"/>
</dbReference>
<dbReference type="DIP" id="DIP-37278N"/>
<dbReference type="FunCoup" id="P80385">
    <property type="interactions" value="2476"/>
</dbReference>
<dbReference type="IntAct" id="P80385">
    <property type="interactions" value="4"/>
</dbReference>
<dbReference type="STRING" id="10116.ENSRNOP00000069442"/>
<dbReference type="BindingDB" id="P80385"/>
<dbReference type="ChEMBL" id="CHEMBL3885503"/>
<dbReference type="ChEMBL" id="CHEMBL4523617"/>
<dbReference type="iPTMnet" id="P80385"/>
<dbReference type="PhosphoSitePlus" id="P80385"/>
<dbReference type="PaxDb" id="10116-ENSRNOP00000020093"/>
<dbReference type="GeneID" id="25520"/>
<dbReference type="KEGG" id="rno:25520"/>
<dbReference type="UCSC" id="RGD:3388">
    <property type="organism name" value="rat"/>
</dbReference>
<dbReference type="AGR" id="RGD:3388"/>
<dbReference type="CTD" id="5571"/>
<dbReference type="RGD" id="3388">
    <property type="gene designation" value="Prkag1"/>
</dbReference>
<dbReference type="VEuPathDB" id="HostDB:ENSRNOG00000070180"/>
<dbReference type="eggNOG" id="KOG1764">
    <property type="taxonomic scope" value="Eukaryota"/>
</dbReference>
<dbReference type="InParanoid" id="P80385"/>
<dbReference type="OrthoDB" id="449052at2759"/>
<dbReference type="PhylomeDB" id="P80385"/>
<dbReference type="TreeFam" id="TF313247"/>
<dbReference type="BRENDA" id="2.7.11.31">
    <property type="organism ID" value="5301"/>
</dbReference>
<dbReference type="Reactome" id="R-RNO-1632852">
    <property type="pathway name" value="Macroautophagy"/>
</dbReference>
<dbReference type="Reactome" id="R-RNO-380972">
    <property type="pathway name" value="Energy dependent regulation of mTOR by LKB1-AMPK"/>
</dbReference>
<dbReference type="Reactome" id="R-RNO-5628897">
    <property type="pathway name" value="TP53 Regulates Metabolic Genes"/>
</dbReference>
<dbReference type="Reactome" id="R-RNO-6804756">
    <property type="pathway name" value="Regulation of TP53 Activity through Phosphorylation"/>
</dbReference>
<dbReference type="EvolutionaryTrace" id="P80385"/>
<dbReference type="PRO" id="PR:P80385"/>
<dbReference type="Proteomes" id="UP000002494">
    <property type="component" value="Chromosome 7"/>
</dbReference>
<dbReference type="Bgee" id="ENSRNOG00000061499">
    <property type="expression patterns" value="Expressed in heart and 20 other cell types or tissues"/>
</dbReference>
<dbReference type="ExpressionAtlas" id="P80385">
    <property type="expression patterns" value="baseline and differential"/>
</dbReference>
<dbReference type="GO" id="GO:0005737">
    <property type="term" value="C:cytoplasm"/>
    <property type="evidence" value="ECO:0000318"/>
    <property type="project" value="GO_Central"/>
</dbReference>
<dbReference type="GO" id="GO:0005829">
    <property type="term" value="C:cytosol"/>
    <property type="evidence" value="ECO:0000304"/>
    <property type="project" value="Reactome"/>
</dbReference>
<dbReference type="GO" id="GO:0031588">
    <property type="term" value="C:nucleotide-activated protein kinase complex"/>
    <property type="evidence" value="ECO:0000314"/>
    <property type="project" value="UniProtKB"/>
</dbReference>
<dbReference type="GO" id="GO:0005634">
    <property type="term" value="C:nucleus"/>
    <property type="evidence" value="ECO:0000266"/>
    <property type="project" value="RGD"/>
</dbReference>
<dbReference type="GO" id="GO:0032991">
    <property type="term" value="C:protein-containing complex"/>
    <property type="evidence" value="ECO:0000314"/>
    <property type="project" value="RGD"/>
</dbReference>
<dbReference type="GO" id="GO:0043531">
    <property type="term" value="F:ADP binding"/>
    <property type="evidence" value="ECO:0000314"/>
    <property type="project" value="UniProtKB"/>
</dbReference>
<dbReference type="GO" id="GO:0016208">
    <property type="term" value="F:AMP binding"/>
    <property type="evidence" value="ECO:0000314"/>
    <property type="project" value="UniProtKB"/>
</dbReference>
<dbReference type="GO" id="GO:0005524">
    <property type="term" value="F:ATP binding"/>
    <property type="evidence" value="ECO:0000314"/>
    <property type="project" value="UniProtKB"/>
</dbReference>
<dbReference type="GO" id="GO:0019901">
    <property type="term" value="F:protein kinase binding"/>
    <property type="evidence" value="ECO:0000353"/>
    <property type="project" value="RGD"/>
</dbReference>
<dbReference type="GO" id="GO:0019887">
    <property type="term" value="F:protein kinase regulator activity"/>
    <property type="evidence" value="ECO:0000314"/>
    <property type="project" value="GO_Central"/>
</dbReference>
<dbReference type="GO" id="GO:0044877">
    <property type="term" value="F:protein-containing complex binding"/>
    <property type="evidence" value="ECO:0000314"/>
    <property type="project" value="RGD"/>
</dbReference>
<dbReference type="GO" id="GO:0042149">
    <property type="term" value="P:cellular response to glucose starvation"/>
    <property type="evidence" value="ECO:0000318"/>
    <property type="project" value="GO_Central"/>
</dbReference>
<dbReference type="GO" id="GO:0031669">
    <property type="term" value="P:cellular response to nutrient levels"/>
    <property type="evidence" value="ECO:0000266"/>
    <property type="project" value="RGD"/>
</dbReference>
<dbReference type="GO" id="GO:0006633">
    <property type="term" value="P:fatty acid biosynthetic process"/>
    <property type="evidence" value="ECO:0007669"/>
    <property type="project" value="UniProtKB-KW"/>
</dbReference>
<dbReference type="GO" id="GO:0051170">
    <property type="term" value="P:import into nucleus"/>
    <property type="evidence" value="ECO:0000266"/>
    <property type="project" value="RGD"/>
</dbReference>
<dbReference type="GO" id="GO:0045722">
    <property type="term" value="P:positive regulation of gluconeogenesis"/>
    <property type="evidence" value="ECO:0000318"/>
    <property type="project" value="GO_Central"/>
</dbReference>
<dbReference type="GO" id="GO:0043609">
    <property type="term" value="P:regulation of carbon utilization"/>
    <property type="evidence" value="ECO:0000318"/>
    <property type="project" value="GO_Central"/>
</dbReference>
<dbReference type="GO" id="GO:0006110">
    <property type="term" value="P:regulation of glycolytic process"/>
    <property type="evidence" value="ECO:0000318"/>
    <property type="project" value="GO_Central"/>
</dbReference>
<dbReference type="CDD" id="cd04618">
    <property type="entry name" value="CBS_euAMPK_gamma-like_repeat1"/>
    <property type="match status" value="1"/>
</dbReference>
<dbReference type="CDD" id="cd04641">
    <property type="entry name" value="CBS_euAMPK_gamma-like_repeat2"/>
    <property type="match status" value="1"/>
</dbReference>
<dbReference type="FunFam" id="3.10.580.10:FF:000003">
    <property type="entry name" value="Protein kinase AMP-activated non-catalytic subunit gamma 1"/>
    <property type="match status" value="1"/>
</dbReference>
<dbReference type="FunFam" id="3.10.580.10:FF:000004">
    <property type="entry name" value="Protein kinase AMP-activated non-catalytic subunit gamma 2"/>
    <property type="match status" value="1"/>
</dbReference>
<dbReference type="Gene3D" id="3.10.580.10">
    <property type="entry name" value="CBS-domain"/>
    <property type="match status" value="2"/>
</dbReference>
<dbReference type="InterPro" id="IPR050511">
    <property type="entry name" value="AMPK_gamma/SDS23_families"/>
</dbReference>
<dbReference type="InterPro" id="IPR000644">
    <property type="entry name" value="CBS_dom"/>
</dbReference>
<dbReference type="InterPro" id="IPR046342">
    <property type="entry name" value="CBS_dom_sf"/>
</dbReference>
<dbReference type="PANTHER" id="PTHR13780:SF38">
    <property type="entry name" value="5'-AMP-ACTIVATED PROTEIN KINASE SUBUNIT GAMMA-1"/>
    <property type="match status" value="1"/>
</dbReference>
<dbReference type="PANTHER" id="PTHR13780">
    <property type="entry name" value="AMP-ACTIVATED PROTEIN KINASE, GAMMA REGULATORY SUBUNIT"/>
    <property type="match status" value="1"/>
</dbReference>
<dbReference type="Pfam" id="PF00571">
    <property type="entry name" value="CBS"/>
    <property type="match status" value="4"/>
</dbReference>
<dbReference type="SMART" id="SM00116">
    <property type="entry name" value="CBS"/>
    <property type="match status" value="4"/>
</dbReference>
<dbReference type="SUPFAM" id="SSF54631">
    <property type="entry name" value="CBS-domain pair"/>
    <property type="match status" value="2"/>
</dbReference>
<dbReference type="PROSITE" id="PS51371">
    <property type="entry name" value="CBS"/>
    <property type="match status" value="4"/>
</dbReference>
<organism>
    <name type="scientific">Rattus norvegicus</name>
    <name type="common">Rat</name>
    <dbReference type="NCBI Taxonomy" id="10116"/>
    <lineage>
        <taxon>Eukaryota</taxon>
        <taxon>Metazoa</taxon>
        <taxon>Chordata</taxon>
        <taxon>Craniata</taxon>
        <taxon>Vertebrata</taxon>
        <taxon>Euteleostomi</taxon>
        <taxon>Mammalia</taxon>
        <taxon>Eutheria</taxon>
        <taxon>Euarchontoglires</taxon>
        <taxon>Glires</taxon>
        <taxon>Rodentia</taxon>
        <taxon>Myomorpha</taxon>
        <taxon>Muroidea</taxon>
        <taxon>Muridae</taxon>
        <taxon>Murinae</taxon>
        <taxon>Rattus</taxon>
    </lineage>
</organism>
<reference key="1">
    <citation type="journal article" date="1996" name="J. Biol. Chem.">
        <title>Characterization of AMP-activated protein kinase beta and gamma subunits. Assembly of the heterotrimeric complex in vitro.</title>
        <authorList>
            <person name="Woods A."/>
            <person name="Cheung P.C.F."/>
            <person name="Smith F.C."/>
            <person name="Davison M.D."/>
            <person name="Scott J."/>
            <person name="Beri R.K."/>
            <person name="Carling D."/>
        </authorList>
    </citation>
    <scope>NUCLEOTIDE SEQUENCE [MRNA]</scope>
    <source>
        <strain>Wistar</strain>
    </source>
</reference>
<reference key="2">
    <citation type="journal article" date="2004" name="Genome Res.">
        <title>The status, quality, and expansion of the NIH full-length cDNA project: the Mammalian Gene Collection (MGC).</title>
        <authorList>
            <consortium name="The MGC Project Team"/>
        </authorList>
    </citation>
    <scope>NUCLEOTIDE SEQUENCE [LARGE SCALE MRNA]</scope>
    <source>
        <tissue>Testis</tissue>
    </source>
</reference>
<reference key="3">
    <citation type="journal article" date="1996" name="J. Biol. Chem.">
        <title>Non-catalytic beta- and gamma-subunit isoforms of the 5'-AMP-activated protein kinase.</title>
        <authorList>
            <person name="Gao G."/>
            <person name="Fernandez C.S."/>
            <person name="Stapleton D."/>
            <person name="Auster A.S."/>
            <person name="Widmer J."/>
            <person name="Dyck J.R.B."/>
            <person name="Kemp B.E."/>
            <person name="Witters L.A."/>
        </authorList>
    </citation>
    <scope>NUCLEOTIDE SEQUENCE [MRNA] OF 8-330</scope>
    <source>
        <strain>Sprague-Dawley</strain>
        <tissue>Liver</tissue>
    </source>
</reference>
<reference key="4">
    <citation type="journal article" date="1994" name="J. Biol. Chem.">
        <title>Mammalian 5'-AMP-activated protein kinase non-catalytic subunits are homologs of proteins that interact with yeast Snf1 protein kinase.</title>
        <authorList>
            <person name="Stapleton D."/>
            <person name="Gao G."/>
            <person name="Michell B.J."/>
            <person name="Widmer J."/>
            <person name="Mitchelhill K.I."/>
            <person name="Teh T."/>
            <person name="House C.M."/>
            <person name="Witters L.A."/>
            <person name="Kemp B.E."/>
        </authorList>
    </citation>
    <scope>NUCLEOTIDE SEQUENCE [MRNA] OF 48-330</scope>
    <scope>PARTIAL PROTEIN SEQUENCE</scope>
    <source>
        <strain>Sprague-Dawley</strain>
        <tissue>Liver</tissue>
    </source>
</reference>
<reference key="5">
    <citation type="journal article" date="2011" name="Autophagy">
        <title>Ulk1-mediated phosphorylation of AMPK constitutes a negative regulatory feedback loop.</title>
        <authorList>
            <person name="Loffler A.S."/>
            <person name="Alers S."/>
            <person name="Dieterle A.M."/>
            <person name="Keppeler H."/>
            <person name="Franz-Wachtel M."/>
            <person name="Kundu M."/>
            <person name="Campbell D.G."/>
            <person name="Wesselborg S."/>
            <person name="Alessi D.R."/>
            <person name="Stork B."/>
        </authorList>
    </citation>
    <scope>PHOSPHORYLATION BY ULK1 AND ULK2</scope>
    <scope>PHOSPHORYLATION AT SER-260; THR-262 AND SER-269</scope>
</reference>
<reference evidence="12 13 14" key="6">
    <citation type="journal article" date="2007" name="Nature">
        <title>Structural basis for AMP binding to mammalian AMP-activated protein kinase.</title>
        <authorList>
            <person name="Xiao B."/>
            <person name="Heath R."/>
            <person name="Saiu P."/>
            <person name="Leiper F.C."/>
            <person name="Leone P."/>
            <person name="Jing C."/>
            <person name="Walker P.A."/>
            <person name="Haire L."/>
            <person name="Eccleston J.F."/>
            <person name="Davis C.T."/>
            <person name="Martin S.R."/>
            <person name="Carling D."/>
            <person name="Gamblin S.J."/>
        </authorList>
    </citation>
    <scope>X-RAY CRYSTALLOGRAPHY (2.1 ANGSTROMS) IN COMPLEXES WITH AMP; ATP; PRKAA1 AND PRKAB2</scope>
    <scope>FUNCTION</scope>
    <scope>DOMAIN CBS</scope>
    <scope>AMP-BINDING</scope>
    <scope>ATP-BINDING</scope>
</reference>
<reference evidence="15 16 17 18" key="7">
    <citation type="journal article" date="2011" name="Nature">
        <title>Structure of mammalian AMPK and its regulation by ADP.</title>
        <authorList>
            <person name="Xiao B."/>
            <person name="Sanders M.J."/>
            <person name="Underwood E."/>
            <person name="Heath R."/>
            <person name="Mayer F.V."/>
            <person name="Carmena D."/>
            <person name="Jing C."/>
            <person name="Walker P.A."/>
            <person name="Eccleston J.F."/>
            <person name="Haire L.F."/>
            <person name="Saiu P."/>
            <person name="Howell S.A."/>
            <person name="Aasland R."/>
            <person name="Martin S.R."/>
            <person name="Carling D."/>
            <person name="Gamblin S.J."/>
        </authorList>
    </citation>
    <scope>X-RAY CRYSTALLOGRAPHY (2.51 ANGSTROMS) IN COMPLEX WITH AMP; ADP; PRKAA1 AND PRKAB2</scope>
    <scope>FUNCTION</scope>
    <scope>DOMAIN CBS</scope>
    <scope>ADP-BINDING</scope>
</reference>
<reference evidence="19 20 21 22 23" key="8">
    <citation type="journal article" date="2012" name="Nat. Struct. Mol. Biol.">
        <title>AMP-activated protein kinase undergoes nucleotide-dependent conformational changes.</title>
        <authorList>
            <person name="Chen L."/>
            <person name="Wang J."/>
            <person name="Zhang Y.Y."/>
            <person name="Yan S.F."/>
            <person name="Neumann D."/>
            <person name="Schlattner U."/>
            <person name="Wang Z.X."/>
            <person name="Wu J.W."/>
        </authorList>
    </citation>
    <scope>X-RAY CRYSTALLOGRAPHY (2.28 ANGSTROMS) IN COMPLEXES WITH AMP AND ATP</scope>
</reference>
<reference evidence="24 25 26" key="9">
    <citation type="journal article" date="2014" name="Structure">
        <title>Structural basis for AMPK activation: natural and synthetic ligands regulate kinase activity from opposite poles by different molecular mechanisms.</title>
        <authorList>
            <person name="Calabrese M.F."/>
            <person name="Rajamohan F."/>
            <person name="Harris M.S."/>
            <person name="Caspers N.L."/>
            <person name="Magyar R."/>
            <person name="Withka J.M."/>
            <person name="Wang H."/>
            <person name="Borzilleri K.A."/>
            <person name="Sahasrabudhe P.V."/>
            <person name="Hoth L.R."/>
            <person name="Geoghegan K.F."/>
            <person name="Han S."/>
            <person name="Brown J."/>
            <person name="Subashi T.A."/>
            <person name="Reyes A.R."/>
            <person name="Frisbie R.K."/>
            <person name="Ward J."/>
            <person name="Miller R.A."/>
            <person name="Landro J.A."/>
            <person name="Londregan A.T."/>
            <person name="Carpino P.A."/>
            <person name="Cabral S."/>
            <person name="Smith A.C."/>
            <person name="Conn E.L."/>
            <person name="Cameron K.O."/>
            <person name="Qiu X."/>
            <person name="Kurumbail R.G."/>
        </authorList>
    </citation>
    <scope>X-RAY CRYSTALLOGRAPHY (3.34 ANGSTROMS) IN COMPLEXES WITH ADP AND AMP</scope>
</reference>
<evidence type="ECO:0000250" key="1"/>
<evidence type="ECO:0000250" key="2">
    <source>
        <dbReference type="UniProtKB" id="P54619"/>
    </source>
</evidence>
<evidence type="ECO:0000255" key="3">
    <source>
        <dbReference type="PROSITE-ProRule" id="PRU00703"/>
    </source>
</evidence>
<evidence type="ECO:0000256" key="4">
    <source>
        <dbReference type="SAM" id="MobiDB-lite"/>
    </source>
</evidence>
<evidence type="ECO:0000269" key="5">
    <source>
    </source>
</evidence>
<evidence type="ECO:0000269" key="6">
    <source>
    </source>
</evidence>
<evidence type="ECO:0000269" key="7">
    <source>
    </source>
</evidence>
<evidence type="ECO:0000269" key="8">
    <source>
    </source>
</evidence>
<evidence type="ECO:0000269" key="9">
    <source>
    </source>
</evidence>
<evidence type="ECO:0000305" key="10"/>
<evidence type="ECO:0000305" key="11">
    <source>
    </source>
</evidence>
<evidence type="ECO:0007744" key="12">
    <source>
        <dbReference type="PDB" id="2V8Q"/>
    </source>
</evidence>
<evidence type="ECO:0007744" key="13">
    <source>
        <dbReference type="PDB" id="2V92"/>
    </source>
</evidence>
<evidence type="ECO:0007744" key="14">
    <source>
        <dbReference type="PDB" id="2V9J"/>
    </source>
</evidence>
<evidence type="ECO:0007744" key="15">
    <source>
        <dbReference type="PDB" id="2Y8L"/>
    </source>
</evidence>
<evidence type="ECO:0007744" key="16">
    <source>
        <dbReference type="PDB" id="2Y8Q"/>
    </source>
</evidence>
<evidence type="ECO:0007744" key="17">
    <source>
        <dbReference type="PDB" id="2YA3"/>
    </source>
</evidence>
<evidence type="ECO:0007744" key="18">
    <source>
        <dbReference type="PDB" id="4CFH"/>
    </source>
</evidence>
<evidence type="ECO:0007744" key="19">
    <source>
        <dbReference type="PDB" id="4EAG"/>
    </source>
</evidence>
<evidence type="ECO:0007744" key="20">
    <source>
        <dbReference type="PDB" id="4EAI"/>
    </source>
</evidence>
<evidence type="ECO:0007744" key="21">
    <source>
        <dbReference type="PDB" id="4EAJ"/>
    </source>
</evidence>
<evidence type="ECO:0007744" key="22">
    <source>
        <dbReference type="PDB" id="4EAK"/>
    </source>
</evidence>
<evidence type="ECO:0007744" key="23">
    <source>
        <dbReference type="PDB" id="4EAL"/>
    </source>
</evidence>
<evidence type="ECO:0007744" key="24">
    <source>
        <dbReference type="PDB" id="4QFG"/>
    </source>
</evidence>
<evidence type="ECO:0007744" key="25">
    <source>
        <dbReference type="PDB" id="4QFR"/>
    </source>
</evidence>
<evidence type="ECO:0007744" key="26">
    <source>
        <dbReference type="PDB" id="4QFS"/>
    </source>
</evidence>
<evidence type="ECO:0007829" key="27">
    <source>
        <dbReference type="PDB" id="2V8Q"/>
    </source>
</evidence>
<evidence type="ECO:0007829" key="28">
    <source>
        <dbReference type="PDB" id="2V9J"/>
    </source>
</evidence>
<evidence type="ECO:0007829" key="29">
    <source>
        <dbReference type="PDB" id="2YA3"/>
    </source>
</evidence>
<evidence type="ECO:0007829" key="30">
    <source>
        <dbReference type="PDB" id="4CFH"/>
    </source>
</evidence>
<evidence type="ECO:0007829" key="31">
    <source>
        <dbReference type="PDB" id="4EAL"/>
    </source>
</evidence>
<evidence type="ECO:0007829" key="32">
    <source>
        <dbReference type="PDB" id="6E4U"/>
    </source>
</evidence>
<sequence length="330" mass="37386">MESVAAESAPAPENEHSQETPESNSSVYTTFMKSHRCYDLIPTSSKLVVFDTSLQVKKAFFALVTNGVRAAPLWDSKKQSFVGMLTITDFINILHRYYKSALVQIYELEEHKIETWREVYLQDSFKPLVCISPNASLFDAVSSLIRNKIHRLPVIDPESGNTLYILTHKRILKFLKLFITEFPKPEFMSKSLEELQIGTYANIAMVRTTTPVYVALGIFVQHRVSALPVVDEKGRVVDIYSKFDVINLAAEKTYNNLDVSVTKALQHRSHYFEGVLKCYLHETLEAIINRLVEAEVHRLVVVDEHDVVKGIVSLSDILQALVLTGGEKKP</sequence>
<keyword id="KW-0002">3D-structure</keyword>
<keyword id="KW-0067">ATP-binding</keyword>
<keyword id="KW-0129">CBS domain</keyword>
<keyword id="KW-0903">Direct protein sequencing</keyword>
<keyword id="KW-0275">Fatty acid biosynthesis</keyword>
<keyword id="KW-0276">Fatty acid metabolism</keyword>
<keyword id="KW-0325">Glycoprotein</keyword>
<keyword id="KW-0444">Lipid biosynthesis</keyword>
<keyword id="KW-0443">Lipid metabolism</keyword>
<keyword id="KW-0547">Nucleotide-binding</keyword>
<keyword id="KW-0597">Phosphoprotein</keyword>
<keyword id="KW-1185">Reference proteome</keyword>
<keyword id="KW-0677">Repeat</keyword>
<proteinExistence type="evidence at protein level"/>